<organism>
    <name type="scientific">Bos taurus</name>
    <name type="common">Bovine</name>
    <dbReference type="NCBI Taxonomy" id="9913"/>
    <lineage>
        <taxon>Eukaryota</taxon>
        <taxon>Metazoa</taxon>
        <taxon>Chordata</taxon>
        <taxon>Craniata</taxon>
        <taxon>Vertebrata</taxon>
        <taxon>Euteleostomi</taxon>
        <taxon>Mammalia</taxon>
        <taxon>Eutheria</taxon>
        <taxon>Laurasiatheria</taxon>
        <taxon>Artiodactyla</taxon>
        <taxon>Ruminantia</taxon>
        <taxon>Pecora</taxon>
        <taxon>Bovidae</taxon>
        <taxon>Bovinae</taxon>
        <taxon>Bos</taxon>
    </lineage>
</organism>
<gene>
    <name type="primary">MEDAG</name>
</gene>
<feature type="chain" id="PRO_0000350570" description="Mesenteric estrogen-dependent adipogenesis protein">
    <location>
        <begin position="1"/>
        <end position="303"/>
    </location>
</feature>
<evidence type="ECO:0000250" key="1"/>
<accession>A4IFN2</accession>
<name>MEDAG_BOVIN</name>
<dbReference type="EMBL" id="BC134670">
    <property type="protein sequence ID" value="AAI34671.1"/>
    <property type="molecule type" value="mRNA"/>
</dbReference>
<dbReference type="RefSeq" id="NP_001077129.1">
    <property type="nucleotide sequence ID" value="NM_001083660.1"/>
</dbReference>
<dbReference type="FunCoup" id="A4IFN2">
    <property type="interactions" value="80"/>
</dbReference>
<dbReference type="STRING" id="9913.ENSBTAP00000010884"/>
<dbReference type="PaxDb" id="9913-ENSBTAP00000010884"/>
<dbReference type="Ensembl" id="ENSBTAT00000010884.5">
    <property type="protein sequence ID" value="ENSBTAP00000010884.4"/>
    <property type="gene ID" value="ENSBTAG00000008271.5"/>
</dbReference>
<dbReference type="GeneID" id="510187"/>
<dbReference type="KEGG" id="bta:510187"/>
<dbReference type="CTD" id="84935"/>
<dbReference type="VEuPathDB" id="HostDB:ENSBTAG00000008271"/>
<dbReference type="VGNC" id="VGNC:31371">
    <property type="gene designation" value="MEDAG"/>
</dbReference>
<dbReference type="eggNOG" id="ENOG502REG3">
    <property type="taxonomic scope" value="Eukaryota"/>
</dbReference>
<dbReference type="GeneTree" id="ENSGT00390000018451"/>
<dbReference type="HOGENOM" id="CLU_080194_0_0_1"/>
<dbReference type="InParanoid" id="A4IFN2"/>
<dbReference type="OMA" id="MAVWSGS"/>
<dbReference type="OrthoDB" id="10008580at2759"/>
<dbReference type="TreeFam" id="TF328824"/>
<dbReference type="Proteomes" id="UP000009136">
    <property type="component" value="Chromosome 12"/>
</dbReference>
<dbReference type="Bgee" id="ENSBTAG00000008271">
    <property type="expression patterns" value="Expressed in ureter and 98 other cell types or tissues"/>
</dbReference>
<dbReference type="GO" id="GO:0005737">
    <property type="term" value="C:cytoplasm"/>
    <property type="evidence" value="ECO:0000250"/>
    <property type="project" value="UniProtKB"/>
</dbReference>
<dbReference type="GO" id="GO:0045600">
    <property type="term" value="P:positive regulation of fat cell differentiation"/>
    <property type="evidence" value="ECO:0000250"/>
    <property type="project" value="UniProtKB"/>
</dbReference>
<dbReference type="InterPro" id="IPR043460">
    <property type="entry name" value="MEDAG/TEX26"/>
</dbReference>
<dbReference type="PANTHER" id="PTHR33769:SF3">
    <property type="entry name" value="MESENTERIC ESTROGEN-DEPENDENT ADIPOGENESIS PROTEIN"/>
    <property type="match status" value="1"/>
</dbReference>
<dbReference type="PANTHER" id="PTHR33769">
    <property type="entry name" value="TESTIS-EXPRESSED PROTEIN 26 ISOFORM X3"/>
    <property type="match status" value="1"/>
</dbReference>
<sequence>MAGLESAPAARPSLTSISSGELRSLWTCDCELALLPLGQLLRLQPGAFQLRGDQLVVPAPAEPASARGGFNVFGDGFVRLDGQLYRLSSYMRRYVELTNYCDYKDYRETILSKPMLFFVHVQTKKDSLKERTYAFLVNTRHPKIRRQIEQGMDMVISSVIGESYRLQFDFQEVVKNFFPPGNKVVNGEDLSFAYEFKADALFDFFYWFGLSNSTVKVNGKVLNLSSTSPEKKETIKLFLEKMSEPLIRRSSFSDRKFSVTSRGSIDEVFNCNLSPRSSLMEPLVAELPFPCVLESEETPNPFI</sequence>
<reference key="1">
    <citation type="submission" date="2007-03" db="EMBL/GenBank/DDBJ databases">
        <authorList>
            <consortium name="NIH - Mammalian Gene Collection (MGC) project"/>
        </authorList>
    </citation>
    <scope>NUCLEOTIDE SEQUENCE [LARGE SCALE MRNA]</scope>
    <source>
        <strain>Hereford</strain>
        <tissue>Fetal muscle</tissue>
    </source>
</reference>
<comment type="function">
    <text evidence="1">Involved in processes that promote adipocyte differentiation, lipid accumulation, and glucose uptake in mature adipocytes.</text>
</comment>
<comment type="subcellular location">
    <subcellularLocation>
        <location evidence="1">Cytoplasm</location>
    </subcellularLocation>
</comment>
<protein>
    <recommendedName>
        <fullName>Mesenteric estrogen-dependent adipogenesis protein</fullName>
    </recommendedName>
</protein>
<proteinExistence type="evidence at transcript level"/>
<keyword id="KW-0963">Cytoplasm</keyword>
<keyword id="KW-1185">Reference proteome</keyword>